<gene>
    <name evidence="1" type="primary">atpB</name>
    <name type="ordered locus">MG405</name>
</gene>
<feature type="chain" id="PRO_0000082060" description="ATP synthase subunit a">
    <location>
        <begin position="1"/>
        <end position="292"/>
    </location>
</feature>
<feature type="transmembrane region" description="Helical" evidence="1">
    <location>
        <begin position="39"/>
        <end position="59"/>
    </location>
</feature>
<feature type="transmembrane region" description="Helical" evidence="1">
    <location>
        <begin position="73"/>
        <end position="93"/>
    </location>
</feature>
<feature type="transmembrane region" description="Helical" evidence="1">
    <location>
        <begin position="102"/>
        <end position="122"/>
    </location>
</feature>
<feature type="transmembrane region" description="Helical" evidence="1">
    <location>
        <begin position="128"/>
        <end position="148"/>
    </location>
</feature>
<feature type="transmembrane region" description="Helical" evidence="1">
    <location>
        <begin position="172"/>
        <end position="192"/>
    </location>
</feature>
<feature type="transmembrane region" description="Helical" evidence="1">
    <location>
        <begin position="196"/>
        <end position="216"/>
    </location>
</feature>
<feature type="transmembrane region" description="Helical" evidence="1">
    <location>
        <begin position="231"/>
        <end position="251"/>
    </location>
</feature>
<comment type="function">
    <text evidence="1">Key component of the proton channel; it plays a direct role in the translocation of protons across the membrane.</text>
</comment>
<comment type="subunit">
    <text evidence="1">F-type ATPases have 2 components, CF(1) - the catalytic core - and CF(0) - the membrane proton channel. CF(1) has five subunits: alpha(3), beta(3), gamma(1), delta(1), epsilon(1). CF(0) has three main subunits: a(1), b(2) and c(9-12). The alpha and beta chains form an alternating ring which encloses part of the gamma chain. CF(1) is attached to CF(0) by a central stalk formed by the gamma and epsilon chains, while a peripheral stalk is formed by the delta and b chains.</text>
</comment>
<comment type="subcellular location">
    <subcellularLocation>
        <location evidence="1">Cell membrane</location>
        <topology evidence="1">Multi-pass membrane protein</topology>
    </subcellularLocation>
</comment>
<comment type="similarity">
    <text evidence="1">Belongs to the ATPase A chain family.</text>
</comment>
<dbReference type="EMBL" id="L43967">
    <property type="protein sequence ID" value="AAC71633.1"/>
    <property type="molecule type" value="Genomic_DNA"/>
</dbReference>
<dbReference type="PIR" id="H64244">
    <property type="entry name" value="H64244"/>
</dbReference>
<dbReference type="RefSeq" id="WP_009885618.1">
    <property type="nucleotide sequence ID" value="NC_000908.2"/>
</dbReference>
<dbReference type="SMR" id="P47645"/>
<dbReference type="FunCoup" id="P47645">
    <property type="interactions" value="142"/>
</dbReference>
<dbReference type="STRING" id="243273.MG_405"/>
<dbReference type="GeneID" id="88282591"/>
<dbReference type="KEGG" id="mge:MG_405"/>
<dbReference type="eggNOG" id="COG0356">
    <property type="taxonomic scope" value="Bacteria"/>
</dbReference>
<dbReference type="HOGENOM" id="CLU_041018_3_0_14"/>
<dbReference type="InParanoid" id="P47645"/>
<dbReference type="OrthoDB" id="9789241at2"/>
<dbReference type="BioCyc" id="MGEN243273:G1GJ2-502-MONOMER"/>
<dbReference type="Proteomes" id="UP000000807">
    <property type="component" value="Chromosome"/>
</dbReference>
<dbReference type="GO" id="GO:0005886">
    <property type="term" value="C:plasma membrane"/>
    <property type="evidence" value="ECO:0000318"/>
    <property type="project" value="GO_Central"/>
</dbReference>
<dbReference type="GO" id="GO:0045259">
    <property type="term" value="C:proton-transporting ATP synthase complex"/>
    <property type="evidence" value="ECO:0007669"/>
    <property type="project" value="UniProtKB-KW"/>
</dbReference>
<dbReference type="GO" id="GO:0046933">
    <property type="term" value="F:proton-transporting ATP synthase activity, rotational mechanism"/>
    <property type="evidence" value="ECO:0000318"/>
    <property type="project" value="GO_Central"/>
</dbReference>
<dbReference type="GO" id="GO:0042777">
    <property type="term" value="P:proton motive force-driven plasma membrane ATP synthesis"/>
    <property type="evidence" value="ECO:0000318"/>
    <property type="project" value="GO_Central"/>
</dbReference>
<dbReference type="CDD" id="cd00310">
    <property type="entry name" value="ATP-synt_Fo_a_6"/>
    <property type="match status" value="1"/>
</dbReference>
<dbReference type="Gene3D" id="1.20.120.220">
    <property type="entry name" value="ATP synthase, F0 complex, subunit A"/>
    <property type="match status" value="1"/>
</dbReference>
<dbReference type="HAMAP" id="MF_01393">
    <property type="entry name" value="ATP_synth_a_bact"/>
    <property type="match status" value="1"/>
</dbReference>
<dbReference type="InterPro" id="IPR045082">
    <property type="entry name" value="ATP_syn_F0_a_bact/chloroplast"/>
</dbReference>
<dbReference type="InterPro" id="IPR000568">
    <property type="entry name" value="ATP_synth_F0_asu"/>
</dbReference>
<dbReference type="InterPro" id="IPR023011">
    <property type="entry name" value="ATP_synth_F0_asu_AS"/>
</dbReference>
<dbReference type="InterPro" id="IPR035908">
    <property type="entry name" value="F0_ATP_A_sf"/>
</dbReference>
<dbReference type="NCBIfam" id="NF004485">
    <property type="entry name" value="PRK05815.3-3"/>
    <property type="match status" value="1"/>
</dbReference>
<dbReference type="PANTHER" id="PTHR42823">
    <property type="entry name" value="ATP SYNTHASE SUBUNIT A, CHLOROPLASTIC"/>
    <property type="match status" value="1"/>
</dbReference>
<dbReference type="PANTHER" id="PTHR42823:SF3">
    <property type="entry name" value="ATP SYNTHASE SUBUNIT A, CHLOROPLASTIC"/>
    <property type="match status" value="1"/>
</dbReference>
<dbReference type="Pfam" id="PF00119">
    <property type="entry name" value="ATP-synt_A"/>
    <property type="match status" value="1"/>
</dbReference>
<dbReference type="PRINTS" id="PR00123">
    <property type="entry name" value="ATPASEA"/>
</dbReference>
<dbReference type="SUPFAM" id="SSF81336">
    <property type="entry name" value="F1F0 ATP synthase subunit A"/>
    <property type="match status" value="1"/>
</dbReference>
<dbReference type="PROSITE" id="PS00449">
    <property type="entry name" value="ATPASE_A"/>
    <property type="match status" value="1"/>
</dbReference>
<name>ATP6_MYCGE</name>
<protein>
    <recommendedName>
        <fullName evidence="1">ATP synthase subunit a</fullName>
    </recommendedName>
    <alternativeName>
        <fullName evidence="1">ATP synthase F0 sector subunit a</fullName>
    </alternativeName>
    <alternativeName>
        <fullName evidence="1">F-ATPase subunit 6</fullName>
    </alternativeName>
</protein>
<reference key="1">
    <citation type="journal article" date="1995" name="Science">
        <title>The minimal gene complement of Mycoplasma genitalium.</title>
        <authorList>
            <person name="Fraser C.M."/>
            <person name="Gocayne J.D."/>
            <person name="White O."/>
            <person name="Adams M.D."/>
            <person name="Clayton R.A."/>
            <person name="Fleischmann R.D."/>
            <person name="Bult C.J."/>
            <person name="Kerlavage A.R."/>
            <person name="Sutton G.G."/>
            <person name="Kelley J.M."/>
            <person name="Fritchman J.L."/>
            <person name="Weidman J.F."/>
            <person name="Small K.V."/>
            <person name="Sandusky M."/>
            <person name="Fuhrmann J.L."/>
            <person name="Nguyen D.T."/>
            <person name="Utterback T.R."/>
            <person name="Saudek D.M."/>
            <person name="Phillips C.A."/>
            <person name="Merrick J.M."/>
            <person name="Tomb J.-F."/>
            <person name="Dougherty B.A."/>
            <person name="Bott K.F."/>
            <person name="Hu P.-C."/>
            <person name="Lucier T.S."/>
            <person name="Peterson S.N."/>
            <person name="Smith H.O."/>
            <person name="Hutchison C.A. III"/>
            <person name="Venter J.C."/>
        </authorList>
    </citation>
    <scope>NUCLEOTIDE SEQUENCE [LARGE SCALE GENOMIC DNA]</scope>
    <source>
        <strain>ATCC 33530 / DSM 19775 / NCTC 10195 / G37</strain>
    </source>
</reference>
<accession>P47645</accession>
<proteinExistence type="inferred from homology"/>
<keyword id="KW-0066">ATP synthesis</keyword>
<keyword id="KW-1003">Cell membrane</keyword>
<keyword id="KW-0138">CF(0)</keyword>
<keyword id="KW-0375">Hydrogen ion transport</keyword>
<keyword id="KW-0406">Ion transport</keyword>
<keyword id="KW-0472">Membrane</keyword>
<keyword id="KW-1185">Reference proteome</keyword>
<keyword id="KW-0812">Transmembrane</keyword>
<keyword id="KW-1133">Transmembrane helix</keyword>
<keyword id="KW-0813">Transport</keyword>
<organism>
    <name type="scientific">Mycoplasma genitalium (strain ATCC 33530 / DSM 19775 / NCTC 10195 / G37)</name>
    <name type="common">Mycoplasmoides genitalium</name>
    <dbReference type="NCBI Taxonomy" id="243273"/>
    <lineage>
        <taxon>Bacteria</taxon>
        <taxon>Bacillati</taxon>
        <taxon>Mycoplasmatota</taxon>
        <taxon>Mycoplasmoidales</taxon>
        <taxon>Mycoplasmoidaceae</taxon>
        <taxon>Mycoplasmoides</taxon>
    </lineage>
</organism>
<evidence type="ECO:0000255" key="1">
    <source>
        <dbReference type="HAMAP-Rule" id="MF_01393"/>
    </source>
</evidence>
<sequence length="292" mass="33176">MSPREIVLKETNQIDFISNQSIFDISPISGWKPFAPTDQILGIFIVFVLLLTFFIFYKLKLKKADSLKNNSYFLLLFQMLFVWVQDTTADLLGEENKKFAPYFLMLLLYIVSSNLVSLLGGISPPTSSLTFTFSLGLATFIGIVVMGIRYQRWNFFKEFAFGITVKGKKYSTFIPNPFSILSGFAPLFSISLRLWGNILAGTVILALFYNFWIFIFSSINNQPLALSLGTVFAGLITPVLHIYFDVIAGVLQGYVFVMLTYNYWAKMRNQGLENNNASELHFKGIKVIQENI</sequence>